<comment type="function">
    <text evidence="1">Catalyzes the transfer of endogenously produced octanoic acid from octanoyl-acyl-carrier-protein onto the lipoyl domains of lipoate-dependent enzymes. Lipoyl-ACP can also act as a substrate although octanoyl-ACP is likely to be the physiological substrate.</text>
</comment>
<comment type="catalytic activity">
    <reaction evidence="1">
        <text>octanoyl-[ACP] + L-lysyl-[protein] = N(6)-octanoyl-L-lysyl-[protein] + holo-[ACP] + H(+)</text>
        <dbReference type="Rhea" id="RHEA:17665"/>
        <dbReference type="Rhea" id="RHEA-COMP:9636"/>
        <dbReference type="Rhea" id="RHEA-COMP:9685"/>
        <dbReference type="Rhea" id="RHEA-COMP:9752"/>
        <dbReference type="Rhea" id="RHEA-COMP:9928"/>
        <dbReference type="ChEBI" id="CHEBI:15378"/>
        <dbReference type="ChEBI" id="CHEBI:29969"/>
        <dbReference type="ChEBI" id="CHEBI:64479"/>
        <dbReference type="ChEBI" id="CHEBI:78463"/>
        <dbReference type="ChEBI" id="CHEBI:78809"/>
        <dbReference type="EC" id="2.3.1.181"/>
    </reaction>
</comment>
<comment type="pathway">
    <text evidence="1">Protein modification; protein lipoylation via endogenous pathway; protein N(6)-(lipoyl)lysine from octanoyl-[acyl-carrier-protein]: step 1/2.</text>
</comment>
<comment type="subcellular location">
    <subcellularLocation>
        <location evidence="1">Cytoplasm</location>
    </subcellularLocation>
</comment>
<comment type="miscellaneous">
    <text evidence="1">In the reaction, the free carboxyl group of octanoic acid is attached via an amide linkage to the epsilon-amino group of a specific lysine residue of lipoyl domains of lipoate-dependent enzymes.</text>
</comment>
<comment type="similarity">
    <text evidence="1">Belongs to the LipB family.</text>
</comment>
<name>LIPB_NITMU</name>
<gene>
    <name evidence="1" type="primary">lipB</name>
    <name type="ordered locus">Nmul_A1988</name>
</gene>
<keyword id="KW-0012">Acyltransferase</keyword>
<keyword id="KW-0963">Cytoplasm</keyword>
<keyword id="KW-1185">Reference proteome</keyword>
<keyword id="KW-0808">Transferase</keyword>
<dbReference type="EC" id="2.3.1.181" evidence="1"/>
<dbReference type="EMBL" id="CP000103">
    <property type="protein sequence ID" value="ABB75283.1"/>
    <property type="molecule type" value="Genomic_DNA"/>
</dbReference>
<dbReference type="RefSeq" id="WP_011381303.1">
    <property type="nucleotide sequence ID" value="NZ_FNVK01000004.1"/>
</dbReference>
<dbReference type="SMR" id="Q2Y7I8"/>
<dbReference type="STRING" id="323848.Nmul_A1988"/>
<dbReference type="KEGG" id="nmu:Nmul_A1988"/>
<dbReference type="eggNOG" id="COG0321">
    <property type="taxonomic scope" value="Bacteria"/>
</dbReference>
<dbReference type="HOGENOM" id="CLU_035168_3_1_4"/>
<dbReference type="OrthoDB" id="9787061at2"/>
<dbReference type="UniPathway" id="UPA00538">
    <property type="reaction ID" value="UER00592"/>
</dbReference>
<dbReference type="Proteomes" id="UP000002718">
    <property type="component" value="Chromosome"/>
</dbReference>
<dbReference type="GO" id="GO:0005737">
    <property type="term" value="C:cytoplasm"/>
    <property type="evidence" value="ECO:0007669"/>
    <property type="project" value="UniProtKB-SubCell"/>
</dbReference>
<dbReference type="GO" id="GO:0033819">
    <property type="term" value="F:lipoyl(octanoyl) transferase activity"/>
    <property type="evidence" value="ECO:0007669"/>
    <property type="project" value="UniProtKB-EC"/>
</dbReference>
<dbReference type="GO" id="GO:0036211">
    <property type="term" value="P:protein modification process"/>
    <property type="evidence" value="ECO:0007669"/>
    <property type="project" value="InterPro"/>
</dbReference>
<dbReference type="CDD" id="cd16444">
    <property type="entry name" value="LipB"/>
    <property type="match status" value="1"/>
</dbReference>
<dbReference type="FunFam" id="3.30.930.10:FF:000020">
    <property type="entry name" value="Octanoyltransferase"/>
    <property type="match status" value="1"/>
</dbReference>
<dbReference type="Gene3D" id="3.30.930.10">
    <property type="entry name" value="Bira Bifunctional Protein, Domain 2"/>
    <property type="match status" value="1"/>
</dbReference>
<dbReference type="HAMAP" id="MF_00013">
    <property type="entry name" value="LipB"/>
    <property type="match status" value="1"/>
</dbReference>
<dbReference type="InterPro" id="IPR045864">
    <property type="entry name" value="aa-tRNA-synth_II/BPL/LPL"/>
</dbReference>
<dbReference type="InterPro" id="IPR004143">
    <property type="entry name" value="BPL_LPL_catalytic"/>
</dbReference>
<dbReference type="InterPro" id="IPR000544">
    <property type="entry name" value="Octanoyltransferase"/>
</dbReference>
<dbReference type="InterPro" id="IPR020605">
    <property type="entry name" value="Octanoyltransferase_CS"/>
</dbReference>
<dbReference type="NCBIfam" id="TIGR00214">
    <property type="entry name" value="lipB"/>
    <property type="match status" value="1"/>
</dbReference>
<dbReference type="NCBIfam" id="NF010922">
    <property type="entry name" value="PRK14342.1"/>
    <property type="match status" value="1"/>
</dbReference>
<dbReference type="PANTHER" id="PTHR10993:SF7">
    <property type="entry name" value="LIPOYLTRANSFERASE 2, MITOCHONDRIAL-RELATED"/>
    <property type="match status" value="1"/>
</dbReference>
<dbReference type="PANTHER" id="PTHR10993">
    <property type="entry name" value="OCTANOYLTRANSFERASE"/>
    <property type="match status" value="1"/>
</dbReference>
<dbReference type="Pfam" id="PF21948">
    <property type="entry name" value="LplA-B_cat"/>
    <property type="match status" value="1"/>
</dbReference>
<dbReference type="PIRSF" id="PIRSF016262">
    <property type="entry name" value="LPLase"/>
    <property type="match status" value="1"/>
</dbReference>
<dbReference type="SUPFAM" id="SSF55681">
    <property type="entry name" value="Class II aaRS and biotin synthetases"/>
    <property type="match status" value="1"/>
</dbReference>
<dbReference type="PROSITE" id="PS51733">
    <property type="entry name" value="BPL_LPL_CATALYTIC"/>
    <property type="match status" value="1"/>
</dbReference>
<dbReference type="PROSITE" id="PS01313">
    <property type="entry name" value="LIPB"/>
    <property type="match status" value="1"/>
</dbReference>
<protein>
    <recommendedName>
        <fullName evidence="1">Octanoyltransferase</fullName>
        <ecNumber evidence="1">2.3.1.181</ecNumber>
    </recommendedName>
    <alternativeName>
        <fullName evidence="1">Lipoate-protein ligase B</fullName>
    </alternativeName>
    <alternativeName>
        <fullName evidence="1">Lipoyl/octanoyl transferase</fullName>
    </alternativeName>
    <alternativeName>
        <fullName evidence="1">Octanoyl-[acyl-carrier-protein]-protein N-octanoyltransferase</fullName>
    </alternativeName>
</protein>
<evidence type="ECO:0000255" key="1">
    <source>
        <dbReference type="HAMAP-Rule" id="MF_00013"/>
    </source>
</evidence>
<evidence type="ECO:0000255" key="2">
    <source>
        <dbReference type="PROSITE-ProRule" id="PRU01067"/>
    </source>
</evidence>
<proteinExistence type="inferred from homology"/>
<accession>Q2Y7I8</accession>
<reference key="1">
    <citation type="submission" date="2005-08" db="EMBL/GenBank/DDBJ databases">
        <title>Complete sequence of chromosome 1 of Nitrosospira multiformis ATCC 25196.</title>
        <authorList>
            <person name="Copeland A."/>
            <person name="Lucas S."/>
            <person name="Lapidus A."/>
            <person name="Barry K."/>
            <person name="Detter J.C."/>
            <person name="Glavina T."/>
            <person name="Hammon N."/>
            <person name="Israni S."/>
            <person name="Pitluck S."/>
            <person name="Chain P."/>
            <person name="Malfatti S."/>
            <person name="Shin M."/>
            <person name="Vergez L."/>
            <person name="Schmutz J."/>
            <person name="Larimer F."/>
            <person name="Land M."/>
            <person name="Hauser L."/>
            <person name="Kyrpides N."/>
            <person name="Lykidis A."/>
            <person name="Richardson P."/>
        </authorList>
    </citation>
    <scope>NUCLEOTIDE SEQUENCE [LARGE SCALE GENOMIC DNA]</scope>
    <source>
        <strain>ATCC 25196 / NCIMB 11849 / C 71</strain>
    </source>
</reference>
<organism>
    <name type="scientific">Nitrosospira multiformis (strain ATCC 25196 / NCIMB 11849 / C 71)</name>
    <dbReference type="NCBI Taxonomy" id="323848"/>
    <lineage>
        <taxon>Bacteria</taxon>
        <taxon>Pseudomonadati</taxon>
        <taxon>Pseudomonadota</taxon>
        <taxon>Betaproteobacteria</taxon>
        <taxon>Nitrosomonadales</taxon>
        <taxon>Nitrosomonadaceae</taxon>
        <taxon>Nitrosospira</taxon>
    </lineage>
</organism>
<sequence>MIQPVSLEFVPGPSGLEVKYAAVMDYLSIWQAMKAFTASRTQNTPDEIWLLQHWPVYTQGVAGKPEHLLCNPGIPVVRTDRGGQITYHGPGQIIAYLLLDMRRLKLGVRDLVRKMEGAVVDLLDEYRVNACGDEDAPGVYVGGAKIAALGLKIKNGCCYHGLALNVSMDLAPFMAINPCGYTGLRVTQTSDLGITDELETLQGKLAEKLKARLKQ</sequence>
<feature type="chain" id="PRO_0000242738" description="Octanoyltransferase">
    <location>
        <begin position="1"/>
        <end position="215"/>
    </location>
</feature>
<feature type="domain" description="BPL/LPL catalytic" evidence="2">
    <location>
        <begin position="42"/>
        <end position="215"/>
    </location>
</feature>
<feature type="active site" description="Acyl-thioester intermediate" evidence="1">
    <location>
        <position position="179"/>
    </location>
</feature>
<feature type="binding site" evidence="1">
    <location>
        <begin position="81"/>
        <end position="88"/>
    </location>
    <ligand>
        <name>substrate</name>
    </ligand>
</feature>
<feature type="binding site" evidence="1">
    <location>
        <begin position="148"/>
        <end position="150"/>
    </location>
    <ligand>
        <name>substrate</name>
    </ligand>
</feature>
<feature type="binding site" evidence="1">
    <location>
        <begin position="161"/>
        <end position="163"/>
    </location>
    <ligand>
        <name>substrate</name>
    </ligand>
</feature>
<feature type="site" description="Lowers pKa of active site Cys" evidence="1">
    <location>
        <position position="145"/>
    </location>
</feature>